<reference key="1">
    <citation type="journal article" date="2009" name="Appl. Environ. Microbiol.">
        <title>Three genomes from the phylum Acidobacteria provide insight into the lifestyles of these microorganisms in soils.</title>
        <authorList>
            <person name="Ward N.L."/>
            <person name="Challacombe J.F."/>
            <person name="Janssen P.H."/>
            <person name="Henrissat B."/>
            <person name="Coutinho P.M."/>
            <person name="Wu M."/>
            <person name="Xie G."/>
            <person name="Haft D.H."/>
            <person name="Sait M."/>
            <person name="Badger J."/>
            <person name="Barabote R.D."/>
            <person name="Bradley B."/>
            <person name="Brettin T.S."/>
            <person name="Brinkac L.M."/>
            <person name="Bruce D."/>
            <person name="Creasy T."/>
            <person name="Daugherty S.C."/>
            <person name="Davidsen T.M."/>
            <person name="DeBoy R.T."/>
            <person name="Detter J.C."/>
            <person name="Dodson R.J."/>
            <person name="Durkin A.S."/>
            <person name="Ganapathy A."/>
            <person name="Gwinn-Giglio M."/>
            <person name="Han C.S."/>
            <person name="Khouri H."/>
            <person name="Kiss H."/>
            <person name="Kothari S.P."/>
            <person name="Madupu R."/>
            <person name="Nelson K.E."/>
            <person name="Nelson W.C."/>
            <person name="Paulsen I."/>
            <person name="Penn K."/>
            <person name="Ren Q."/>
            <person name="Rosovitz M.J."/>
            <person name="Selengut J.D."/>
            <person name="Shrivastava S."/>
            <person name="Sullivan S.A."/>
            <person name="Tapia R."/>
            <person name="Thompson L.S."/>
            <person name="Watkins K.L."/>
            <person name="Yang Q."/>
            <person name="Yu C."/>
            <person name="Zafar N."/>
            <person name="Zhou L."/>
            <person name="Kuske C.R."/>
        </authorList>
    </citation>
    <scope>NUCLEOTIDE SEQUENCE [LARGE SCALE GENOMIC DNA]</scope>
    <source>
        <strain>Ellin6076</strain>
    </source>
</reference>
<accession>Q01Q46</accession>
<gene>
    <name evidence="1" type="primary">murD</name>
    <name type="ordered locus">Acid_7313</name>
</gene>
<comment type="function">
    <text evidence="1">Cell wall formation. Catalyzes the addition of glutamate to the nucleotide precursor UDP-N-acetylmuramoyl-L-alanine (UMA).</text>
</comment>
<comment type="catalytic activity">
    <reaction evidence="1">
        <text>UDP-N-acetyl-alpha-D-muramoyl-L-alanine + D-glutamate + ATP = UDP-N-acetyl-alpha-D-muramoyl-L-alanyl-D-glutamate + ADP + phosphate + H(+)</text>
        <dbReference type="Rhea" id="RHEA:16429"/>
        <dbReference type="ChEBI" id="CHEBI:15378"/>
        <dbReference type="ChEBI" id="CHEBI:29986"/>
        <dbReference type="ChEBI" id="CHEBI:30616"/>
        <dbReference type="ChEBI" id="CHEBI:43474"/>
        <dbReference type="ChEBI" id="CHEBI:83898"/>
        <dbReference type="ChEBI" id="CHEBI:83900"/>
        <dbReference type="ChEBI" id="CHEBI:456216"/>
        <dbReference type="EC" id="6.3.2.9"/>
    </reaction>
</comment>
<comment type="pathway">
    <text evidence="1">Cell wall biogenesis; peptidoglycan biosynthesis.</text>
</comment>
<comment type="subcellular location">
    <subcellularLocation>
        <location evidence="1">Cytoplasm</location>
    </subcellularLocation>
</comment>
<comment type="similarity">
    <text evidence="1">Belongs to the MurCDEF family.</text>
</comment>
<name>MURD_SOLUE</name>
<sequence length="442" mass="47153">MKLQGVRALVVGMRKSGVASAEFLARRGAVVSATDLKPLDELPGVGELGIPFAVQTPAVFEGYDLIVPSPDVPYDLPPLEEARRHGVRVIGEVELAAPFLKGRTIGITGSNGKTTTTSLTGHILREAGVPVQVGGNIGLPVTAMVESSRDDGWNVLELSSFQLETIHEFRAHIGLALNVTQNHLDRHHTFENYAAIKGRLFETQQAGDYAVLNAEDPVCVAYAARTRATVQWFSSRKKVDPGATLCGNKLVLFGKLLMEAGEIPIRGRHNIENVLAAAIAASRAGVEHAAIAAAVRSFRAVEHRLEFVRKLNGVDFYNDSKATSVDATLKALDAFPGGLWVILGGKDKGLDYAALREPLTEKARAALLIGAAAGKIAEQIAGAVPLVDAKTLDGAVRHAFAHAAPGDTVLLAPACASFDQFKSYEHRGETFKQIVNGLEPKD</sequence>
<feature type="chain" id="PRO_0000301449" description="UDP-N-acetylmuramoylalanine--D-glutamate ligase">
    <location>
        <begin position="1"/>
        <end position="442"/>
    </location>
</feature>
<feature type="binding site" evidence="1">
    <location>
        <begin position="109"/>
        <end position="115"/>
    </location>
    <ligand>
        <name>ATP</name>
        <dbReference type="ChEBI" id="CHEBI:30616"/>
    </ligand>
</feature>
<keyword id="KW-0067">ATP-binding</keyword>
<keyword id="KW-0131">Cell cycle</keyword>
<keyword id="KW-0132">Cell division</keyword>
<keyword id="KW-0133">Cell shape</keyword>
<keyword id="KW-0961">Cell wall biogenesis/degradation</keyword>
<keyword id="KW-0963">Cytoplasm</keyword>
<keyword id="KW-0436">Ligase</keyword>
<keyword id="KW-0547">Nucleotide-binding</keyword>
<keyword id="KW-0573">Peptidoglycan synthesis</keyword>
<dbReference type="EC" id="6.3.2.9" evidence="1"/>
<dbReference type="EMBL" id="CP000473">
    <property type="protein sequence ID" value="ABJ88224.1"/>
    <property type="molecule type" value="Genomic_DNA"/>
</dbReference>
<dbReference type="SMR" id="Q01Q46"/>
<dbReference type="FunCoup" id="Q01Q46">
    <property type="interactions" value="547"/>
</dbReference>
<dbReference type="STRING" id="234267.Acid_7313"/>
<dbReference type="KEGG" id="sus:Acid_7313"/>
<dbReference type="eggNOG" id="COG0771">
    <property type="taxonomic scope" value="Bacteria"/>
</dbReference>
<dbReference type="HOGENOM" id="CLU_032540_0_0_0"/>
<dbReference type="InParanoid" id="Q01Q46"/>
<dbReference type="OrthoDB" id="9809796at2"/>
<dbReference type="UniPathway" id="UPA00219"/>
<dbReference type="GO" id="GO:0005737">
    <property type="term" value="C:cytoplasm"/>
    <property type="evidence" value="ECO:0007669"/>
    <property type="project" value="UniProtKB-SubCell"/>
</dbReference>
<dbReference type="GO" id="GO:0005524">
    <property type="term" value="F:ATP binding"/>
    <property type="evidence" value="ECO:0007669"/>
    <property type="project" value="UniProtKB-UniRule"/>
</dbReference>
<dbReference type="GO" id="GO:0008764">
    <property type="term" value="F:UDP-N-acetylmuramoylalanine-D-glutamate ligase activity"/>
    <property type="evidence" value="ECO:0007669"/>
    <property type="project" value="UniProtKB-UniRule"/>
</dbReference>
<dbReference type="GO" id="GO:0051301">
    <property type="term" value="P:cell division"/>
    <property type="evidence" value="ECO:0007669"/>
    <property type="project" value="UniProtKB-KW"/>
</dbReference>
<dbReference type="GO" id="GO:0071555">
    <property type="term" value="P:cell wall organization"/>
    <property type="evidence" value="ECO:0007669"/>
    <property type="project" value="UniProtKB-KW"/>
</dbReference>
<dbReference type="GO" id="GO:0009252">
    <property type="term" value="P:peptidoglycan biosynthetic process"/>
    <property type="evidence" value="ECO:0007669"/>
    <property type="project" value="UniProtKB-UniRule"/>
</dbReference>
<dbReference type="GO" id="GO:0008360">
    <property type="term" value="P:regulation of cell shape"/>
    <property type="evidence" value="ECO:0007669"/>
    <property type="project" value="UniProtKB-KW"/>
</dbReference>
<dbReference type="Gene3D" id="3.90.190.20">
    <property type="entry name" value="Mur ligase, C-terminal domain"/>
    <property type="match status" value="1"/>
</dbReference>
<dbReference type="Gene3D" id="3.40.1190.10">
    <property type="entry name" value="Mur-like, catalytic domain"/>
    <property type="match status" value="1"/>
</dbReference>
<dbReference type="Gene3D" id="3.40.50.720">
    <property type="entry name" value="NAD(P)-binding Rossmann-like Domain"/>
    <property type="match status" value="1"/>
</dbReference>
<dbReference type="HAMAP" id="MF_00639">
    <property type="entry name" value="MurD"/>
    <property type="match status" value="1"/>
</dbReference>
<dbReference type="InterPro" id="IPR036565">
    <property type="entry name" value="Mur-like_cat_sf"/>
</dbReference>
<dbReference type="InterPro" id="IPR004101">
    <property type="entry name" value="Mur_ligase_C"/>
</dbReference>
<dbReference type="InterPro" id="IPR036615">
    <property type="entry name" value="Mur_ligase_C_dom_sf"/>
</dbReference>
<dbReference type="InterPro" id="IPR013221">
    <property type="entry name" value="Mur_ligase_cen"/>
</dbReference>
<dbReference type="InterPro" id="IPR005762">
    <property type="entry name" value="MurD"/>
</dbReference>
<dbReference type="NCBIfam" id="TIGR01087">
    <property type="entry name" value="murD"/>
    <property type="match status" value="1"/>
</dbReference>
<dbReference type="PANTHER" id="PTHR43692">
    <property type="entry name" value="UDP-N-ACETYLMURAMOYLALANINE--D-GLUTAMATE LIGASE"/>
    <property type="match status" value="1"/>
</dbReference>
<dbReference type="PANTHER" id="PTHR43692:SF1">
    <property type="entry name" value="UDP-N-ACETYLMURAMOYLALANINE--D-GLUTAMATE LIGASE"/>
    <property type="match status" value="1"/>
</dbReference>
<dbReference type="Pfam" id="PF02875">
    <property type="entry name" value="Mur_ligase_C"/>
    <property type="match status" value="1"/>
</dbReference>
<dbReference type="Pfam" id="PF08245">
    <property type="entry name" value="Mur_ligase_M"/>
    <property type="match status" value="1"/>
</dbReference>
<dbReference type="SUPFAM" id="SSF51984">
    <property type="entry name" value="MurCD N-terminal domain"/>
    <property type="match status" value="1"/>
</dbReference>
<dbReference type="SUPFAM" id="SSF53623">
    <property type="entry name" value="MurD-like peptide ligases, catalytic domain"/>
    <property type="match status" value="1"/>
</dbReference>
<dbReference type="SUPFAM" id="SSF53244">
    <property type="entry name" value="MurD-like peptide ligases, peptide-binding domain"/>
    <property type="match status" value="1"/>
</dbReference>
<organism>
    <name type="scientific">Solibacter usitatus (strain Ellin6076)</name>
    <dbReference type="NCBI Taxonomy" id="234267"/>
    <lineage>
        <taxon>Bacteria</taxon>
        <taxon>Pseudomonadati</taxon>
        <taxon>Acidobacteriota</taxon>
        <taxon>Terriglobia</taxon>
        <taxon>Bryobacterales</taxon>
        <taxon>Solibacteraceae</taxon>
        <taxon>Candidatus Solibacter</taxon>
    </lineage>
</organism>
<proteinExistence type="inferred from homology"/>
<protein>
    <recommendedName>
        <fullName evidence="1">UDP-N-acetylmuramoylalanine--D-glutamate ligase</fullName>
        <ecNumber evidence="1">6.3.2.9</ecNumber>
    </recommendedName>
    <alternativeName>
        <fullName evidence="1">D-glutamic acid-adding enzyme</fullName>
    </alternativeName>
    <alternativeName>
        <fullName evidence="1">UDP-N-acetylmuramoyl-L-alanyl-D-glutamate synthetase</fullName>
    </alternativeName>
</protein>
<evidence type="ECO:0000255" key="1">
    <source>
        <dbReference type="HAMAP-Rule" id="MF_00639"/>
    </source>
</evidence>